<comment type="function">
    <text evidence="1">Phosphorolytic 3'-5' exoribonuclease that plays an important role in tRNA 3'-end maturation. Removes nucleotide residues following the 3'-CCA terminus of tRNAs; can also add nucleotides to the ends of RNA molecules by using nucleoside diphosphates as substrates, but this may not be physiologically important. Probably plays a role in initiation of 16S rRNA degradation (leading to ribosome degradation) during starvation.</text>
</comment>
<comment type="catalytic activity">
    <reaction evidence="1">
        <text>tRNA(n+1) + phosphate = tRNA(n) + a ribonucleoside 5'-diphosphate</text>
        <dbReference type="Rhea" id="RHEA:10628"/>
        <dbReference type="Rhea" id="RHEA-COMP:17343"/>
        <dbReference type="Rhea" id="RHEA-COMP:17344"/>
        <dbReference type="ChEBI" id="CHEBI:43474"/>
        <dbReference type="ChEBI" id="CHEBI:57930"/>
        <dbReference type="ChEBI" id="CHEBI:173114"/>
        <dbReference type="EC" id="2.7.7.56"/>
    </reaction>
</comment>
<comment type="subunit">
    <text evidence="1">Homohexameric ring arranged as a trimer of dimers.</text>
</comment>
<comment type="similarity">
    <text evidence="1">Belongs to the RNase PH family.</text>
</comment>
<proteinExistence type="inferred from homology"/>
<organism>
    <name type="scientific">Rhizobium leguminosarum bv. trifolii (strain WSM2304)</name>
    <dbReference type="NCBI Taxonomy" id="395492"/>
    <lineage>
        <taxon>Bacteria</taxon>
        <taxon>Pseudomonadati</taxon>
        <taxon>Pseudomonadota</taxon>
        <taxon>Alphaproteobacteria</taxon>
        <taxon>Hyphomicrobiales</taxon>
        <taxon>Rhizobiaceae</taxon>
        <taxon>Rhizobium/Agrobacterium group</taxon>
        <taxon>Rhizobium</taxon>
    </lineage>
</organism>
<name>RNPH_RHILW</name>
<reference key="1">
    <citation type="journal article" date="2010" name="Stand. Genomic Sci.">
        <title>Complete genome sequence of Rhizobium leguminosarum bv trifolii strain WSM2304, an effective microsymbiont of the South American clover Trifolium polymorphum.</title>
        <authorList>
            <person name="Reeve W."/>
            <person name="O'Hara G."/>
            <person name="Chain P."/>
            <person name="Ardley J."/>
            <person name="Brau L."/>
            <person name="Nandesena K."/>
            <person name="Tiwari R."/>
            <person name="Malfatti S."/>
            <person name="Kiss H."/>
            <person name="Lapidus A."/>
            <person name="Copeland A."/>
            <person name="Nolan M."/>
            <person name="Land M."/>
            <person name="Ivanova N."/>
            <person name="Mavromatis K."/>
            <person name="Markowitz V."/>
            <person name="Kyrpides N."/>
            <person name="Melino V."/>
            <person name="Denton M."/>
            <person name="Yates R."/>
            <person name="Howieson J."/>
        </authorList>
    </citation>
    <scope>NUCLEOTIDE SEQUENCE [LARGE SCALE GENOMIC DNA]</scope>
    <source>
        <strain>WSM2304</strain>
    </source>
</reference>
<accession>B5ZMW8</accession>
<protein>
    <recommendedName>
        <fullName evidence="1">Ribonuclease PH</fullName>
        <shortName evidence="1">RNase PH</shortName>
        <ecNumber evidence="1">2.7.7.56</ecNumber>
    </recommendedName>
    <alternativeName>
        <fullName evidence="1">tRNA nucleotidyltransferase</fullName>
    </alternativeName>
</protein>
<gene>
    <name evidence="1" type="primary">rph</name>
    <name type="ordered locus">Rleg2_0006</name>
</gene>
<feature type="chain" id="PRO_1000129363" description="Ribonuclease PH">
    <location>
        <begin position="1"/>
        <end position="239"/>
    </location>
</feature>
<feature type="binding site" evidence="1">
    <location>
        <position position="86"/>
    </location>
    <ligand>
        <name>phosphate</name>
        <dbReference type="ChEBI" id="CHEBI:43474"/>
        <note>substrate</note>
    </ligand>
</feature>
<feature type="binding site" evidence="1">
    <location>
        <begin position="124"/>
        <end position="126"/>
    </location>
    <ligand>
        <name>phosphate</name>
        <dbReference type="ChEBI" id="CHEBI:43474"/>
        <note>substrate</note>
    </ligand>
</feature>
<sequence length="239" mass="25970">MRPSGRKIDQMRKVSFERNFSKHAEGSCLVKFGDTHVLCTASLEEKTPPWLRNSGKGWVTAEYGMLPRATGERMKREAAAGKQGGRTQEIQRLIGRSLRAVVDLQALGERQITLDCDVIQADGGTRTASITGGWIALYDCLKWMESRNMIKVDRVLKDHVAAISCGVFASQPVIDLDYLEDSSAETDANFVMTGAGGIVEIQGTAEGTPFSEEEFTSLMGLAKNGIGELVALQKQAIAG</sequence>
<dbReference type="EC" id="2.7.7.56" evidence="1"/>
<dbReference type="EMBL" id="CP001191">
    <property type="protein sequence ID" value="ACI53309.1"/>
    <property type="molecule type" value="Genomic_DNA"/>
</dbReference>
<dbReference type="RefSeq" id="WP_003589014.1">
    <property type="nucleotide sequence ID" value="NC_011369.1"/>
</dbReference>
<dbReference type="SMR" id="B5ZMW8"/>
<dbReference type="STRING" id="395492.Rleg2_0006"/>
<dbReference type="KEGG" id="rlt:Rleg2_0006"/>
<dbReference type="eggNOG" id="COG0689">
    <property type="taxonomic scope" value="Bacteria"/>
</dbReference>
<dbReference type="HOGENOM" id="CLU_050858_0_0_5"/>
<dbReference type="Proteomes" id="UP000008330">
    <property type="component" value="Chromosome"/>
</dbReference>
<dbReference type="GO" id="GO:0000175">
    <property type="term" value="F:3'-5'-RNA exonuclease activity"/>
    <property type="evidence" value="ECO:0007669"/>
    <property type="project" value="UniProtKB-UniRule"/>
</dbReference>
<dbReference type="GO" id="GO:0000049">
    <property type="term" value="F:tRNA binding"/>
    <property type="evidence" value="ECO:0007669"/>
    <property type="project" value="UniProtKB-UniRule"/>
</dbReference>
<dbReference type="GO" id="GO:0009022">
    <property type="term" value="F:tRNA nucleotidyltransferase activity"/>
    <property type="evidence" value="ECO:0007669"/>
    <property type="project" value="UniProtKB-UniRule"/>
</dbReference>
<dbReference type="GO" id="GO:0016075">
    <property type="term" value="P:rRNA catabolic process"/>
    <property type="evidence" value="ECO:0007669"/>
    <property type="project" value="UniProtKB-UniRule"/>
</dbReference>
<dbReference type="GO" id="GO:0006364">
    <property type="term" value="P:rRNA processing"/>
    <property type="evidence" value="ECO:0007669"/>
    <property type="project" value="UniProtKB-KW"/>
</dbReference>
<dbReference type="GO" id="GO:0008033">
    <property type="term" value="P:tRNA processing"/>
    <property type="evidence" value="ECO:0007669"/>
    <property type="project" value="UniProtKB-UniRule"/>
</dbReference>
<dbReference type="CDD" id="cd11362">
    <property type="entry name" value="RNase_PH_bact"/>
    <property type="match status" value="1"/>
</dbReference>
<dbReference type="FunFam" id="3.30.230.70:FF:000003">
    <property type="entry name" value="Ribonuclease PH"/>
    <property type="match status" value="1"/>
</dbReference>
<dbReference type="Gene3D" id="3.30.230.70">
    <property type="entry name" value="GHMP Kinase, N-terminal domain"/>
    <property type="match status" value="1"/>
</dbReference>
<dbReference type="HAMAP" id="MF_00564">
    <property type="entry name" value="RNase_PH"/>
    <property type="match status" value="1"/>
</dbReference>
<dbReference type="InterPro" id="IPR001247">
    <property type="entry name" value="ExoRNase_PH_dom1"/>
</dbReference>
<dbReference type="InterPro" id="IPR015847">
    <property type="entry name" value="ExoRNase_PH_dom2"/>
</dbReference>
<dbReference type="InterPro" id="IPR036345">
    <property type="entry name" value="ExoRNase_PH_dom2_sf"/>
</dbReference>
<dbReference type="InterPro" id="IPR027408">
    <property type="entry name" value="PNPase/RNase_PH_dom_sf"/>
</dbReference>
<dbReference type="InterPro" id="IPR020568">
    <property type="entry name" value="Ribosomal_Su5_D2-typ_SF"/>
</dbReference>
<dbReference type="InterPro" id="IPR050080">
    <property type="entry name" value="RNase_PH"/>
</dbReference>
<dbReference type="InterPro" id="IPR002381">
    <property type="entry name" value="RNase_PH_bac-type"/>
</dbReference>
<dbReference type="InterPro" id="IPR018336">
    <property type="entry name" value="RNase_PH_CS"/>
</dbReference>
<dbReference type="NCBIfam" id="TIGR01966">
    <property type="entry name" value="RNasePH"/>
    <property type="match status" value="1"/>
</dbReference>
<dbReference type="PANTHER" id="PTHR11953">
    <property type="entry name" value="EXOSOME COMPLEX COMPONENT"/>
    <property type="match status" value="1"/>
</dbReference>
<dbReference type="PANTHER" id="PTHR11953:SF0">
    <property type="entry name" value="EXOSOME COMPLEX COMPONENT RRP41"/>
    <property type="match status" value="1"/>
</dbReference>
<dbReference type="Pfam" id="PF01138">
    <property type="entry name" value="RNase_PH"/>
    <property type="match status" value="1"/>
</dbReference>
<dbReference type="Pfam" id="PF03725">
    <property type="entry name" value="RNase_PH_C"/>
    <property type="match status" value="1"/>
</dbReference>
<dbReference type="SUPFAM" id="SSF55666">
    <property type="entry name" value="Ribonuclease PH domain 2-like"/>
    <property type="match status" value="1"/>
</dbReference>
<dbReference type="SUPFAM" id="SSF54211">
    <property type="entry name" value="Ribosomal protein S5 domain 2-like"/>
    <property type="match status" value="1"/>
</dbReference>
<dbReference type="PROSITE" id="PS01277">
    <property type="entry name" value="RIBONUCLEASE_PH"/>
    <property type="match status" value="1"/>
</dbReference>
<evidence type="ECO:0000255" key="1">
    <source>
        <dbReference type="HAMAP-Rule" id="MF_00564"/>
    </source>
</evidence>
<keyword id="KW-0548">Nucleotidyltransferase</keyword>
<keyword id="KW-1185">Reference proteome</keyword>
<keyword id="KW-0694">RNA-binding</keyword>
<keyword id="KW-0698">rRNA processing</keyword>
<keyword id="KW-0808">Transferase</keyword>
<keyword id="KW-0819">tRNA processing</keyword>
<keyword id="KW-0820">tRNA-binding</keyword>